<feature type="chain" id="PRO_0000278380" description="DNA ligase 4">
    <location>
        <begin position="1"/>
        <end position="1025"/>
    </location>
</feature>
<feature type="domain" description="BRCT 1" evidence="4">
    <location>
        <begin position="667"/>
        <end position="763"/>
    </location>
</feature>
<feature type="domain" description="BRCT 2" evidence="4">
    <location>
        <begin position="915"/>
        <end position="1025"/>
    </location>
</feature>
<feature type="region of interest" description="Disordered" evidence="6">
    <location>
        <begin position="1"/>
        <end position="36"/>
    </location>
</feature>
<feature type="region of interest" description="Disordered" evidence="6">
    <location>
        <begin position="773"/>
        <end position="904"/>
    </location>
</feature>
<feature type="compositionally biased region" description="Acidic residues" evidence="6">
    <location>
        <begin position="775"/>
        <end position="785"/>
    </location>
</feature>
<feature type="compositionally biased region" description="Acidic residues" evidence="6">
    <location>
        <begin position="806"/>
        <end position="816"/>
    </location>
</feature>
<feature type="compositionally biased region" description="Basic and acidic residues" evidence="6">
    <location>
        <begin position="817"/>
        <end position="838"/>
    </location>
</feature>
<feature type="compositionally biased region" description="Acidic residues" evidence="6">
    <location>
        <begin position="845"/>
        <end position="870"/>
    </location>
</feature>
<feature type="compositionally biased region" description="Basic and acidic residues" evidence="6">
    <location>
        <begin position="891"/>
        <end position="904"/>
    </location>
</feature>
<feature type="active site" description="N6-AMP-lysine intermediate" evidence="5">
    <location>
        <position position="291"/>
    </location>
</feature>
<feature type="binding site" evidence="1">
    <location>
        <position position="289"/>
    </location>
    <ligand>
        <name>ATP</name>
        <dbReference type="ChEBI" id="CHEBI:30616"/>
    </ligand>
</feature>
<feature type="binding site" evidence="1">
    <location>
        <position position="291"/>
    </location>
    <ligand>
        <name>ATP</name>
        <dbReference type="ChEBI" id="CHEBI:30616"/>
    </ligand>
</feature>
<feature type="binding site" evidence="1">
    <location>
        <position position="292"/>
    </location>
    <ligand>
        <name>ATP</name>
        <dbReference type="ChEBI" id="CHEBI:30616"/>
    </ligand>
</feature>
<feature type="binding site" evidence="1">
    <location>
        <position position="296"/>
    </location>
    <ligand>
        <name>ATP</name>
        <dbReference type="ChEBI" id="CHEBI:30616"/>
    </ligand>
</feature>
<feature type="binding site" evidence="1">
    <location>
        <position position="349"/>
    </location>
    <ligand>
        <name>ATP</name>
        <dbReference type="ChEBI" id="CHEBI:30616"/>
    </ligand>
</feature>
<feature type="binding site" evidence="3">
    <location>
        <position position="349"/>
    </location>
    <ligand>
        <name>Mg(2+)</name>
        <dbReference type="ChEBI" id="CHEBI:18420"/>
        <label>1</label>
    </ligand>
</feature>
<feature type="binding site" evidence="1">
    <location>
        <position position="387"/>
    </location>
    <ligand>
        <name>ATP</name>
        <dbReference type="ChEBI" id="CHEBI:30616"/>
    </ligand>
</feature>
<feature type="binding site" evidence="1">
    <location>
        <position position="447"/>
    </location>
    <ligand>
        <name>ATP</name>
        <dbReference type="ChEBI" id="CHEBI:30616"/>
    </ligand>
</feature>
<feature type="binding site" evidence="3">
    <location>
        <position position="447"/>
    </location>
    <ligand>
        <name>Mg(2+)</name>
        <dbReference type="ChEBI" id="CHEBI:18420"/>
        <label>2</label>
    </ligand>
</feature>
<feature type="binding site" evidence="1">
    <location>
        <position position="452"/>
    </location>
    <ligand>
        <name>ATP</name>
        <dbReference type="ChEBI" id="CHEBI:30616"/>
    </ligand>
</feature>
<feature type="binding site" evidence="1">
    <location>
        <position position="469"/>
    </location>
    <ligand>
        <name>ATP</name>
        <dbReference type="ChEBI" id="CHEBI:30616"/>
    </ligand>
</feature>
<feature type="binding site" evidence="1">
    <location>
        <position position="471"/>
    </location>
    <ligand>
        <name>ATP</name>
        <dbReference type="ChEBI" id="CHEBI:30616"/>
    </ligand>
</feature>
<gene>
    <name type="primary">LIG4</name>
</gene>
<accession>Q7Z7W5</accession>
<dbReference type="EC" id="6.5.1.1" evidence="5"/>
<dbReference type="EMBL" id="AB098474">
    <property type="protein sequence ID" value="BAC76766.1"/>
    <property type="molecule type" value="mRNA"/>
</dbReference>
<dbReference type="EMBL" id="AB072455">
    <property type="protein sequence ID" value="BAD93669.1"/>
    <property type="molecule type" value="mRNA"/>
</dbReference>
<dbReference type="SMR" id="Q7Z7W5"/>
<dbReference type="VEuPathDB" id="FungiDB:CC1G_14831"/>
<dbReference type="VEuPathDB" id="FungiDB:CC2G_011852"/>
<dbReference type="GO" id="GO:0032807">
    <property type="term" value="C:DNA ligase IV complex"/>
    <property type="evidence" value="ECO:0007669"/>
    <property type="project" value="TreeGrafter"/>
</dbReference>
<dbReference type="GO" id="GO:0005524">
    <property type="term" value="F:ATP binding"/>
    <property type="evidence" value="ECO:0007669"/>
    <property type="project" value="UniProtKB-KW"/>
</dbReference>
<dbReference type="GO" id="GO:0003677">
    <property type="term" value="F:DNA binding"/>
    <property type="evidence" value="ECO:0007669"/>
    <property type="project" value="InterPro"/>
</dbReference>
<dbReference type="GO" id="GO:0003910">
    <property type="term" value="F:DNA ligase (ATP) activity"/>
    <property type="evidence" value="ECO:0000250"/>
    <property type="project" value="UniProtKB"/>
</dbReference>
<dbReference type="GO" id="GO:0046872">
    <property type="term" value="F:metal ion binding"/>
    <property type="evidence" value="ECO:0007669"/>
    <property type="project" value="UniProtKB-KW"/>
</dbReference>
<dbReference type="GO" id="GO:0071897">
    <property type="term" value="P:DNA biosynthetic process"/>
    <property type="evidence" value="ECO:0007669"/>
    <property type="project" value="InterPro"/>
</dbReference>
<dbReference type="GO" id="GO:0006310">
    <property type="term" value="P:DNA recombination"/>
    <property type="evidence" value="ECO:0007669"/>
    <property type="project" value="UniProtKB-KW"/>
</dbReference>
<dbReference type="GO" id="GO:0097680">
    <property type="term" value="P:double-strand break repair via classical nonhomologous end joining"/>
    <property type="evidence" value="ECO:0000250"/>
    <property type="project" value="UniProtKB"/>
</dbReference>
<dbReference type="GO" id="GO:0006297">
    <property type="term" value="P:nucleotide-excision repair, DNA gap filling"/>
    <property type="evidence" value="ECO:0007669"/>
    <property type="project" value="TreeGrafter"/>
</dbReference>
<dbReference type="CDD" id="cd07903">
    <property type="entry name" value="Adenylation_DNA_ligase_IV"/>
    <property type="match status" value="1"/>
</dbReference>
<dbReference type="CDD" id="cd18435">
    <property type="entry name" value="BRCT_BRC1_like_rpt1"/>
    <property type="match status" value="1"/>
</dbReference>
<dbReference type="CDD" id="cd17722">
    <property type="entry name" value="BRCT_DNA_ligase_IV_rpt1"/>
    <property type="match status" value="1"/>
</dbReference>
<dbReference type="CDD" id="cd07968">
    <property type="entry name" value="OBF_DNA_ligase_IV"/>
    <property type="match status" value="1"/>
</dbReference>
<dbReference type="Gene3D" id="3.40.50.10190">
    <property type="entry name" value="BRCT domain"/>
    <property type="match status" value="2"/>
</dbReference>
<dbReference type="Gene3D" id="1.10.3260.10">
    <property type="entry name" value="DNA ligase, ATP-dependent, N-terminal domain"/>
    <property type="match status" value="1"/>
</dbReference>
<dbReference type="Gene3D" id="3.30.470.30">
    <property type="entry name" value="DNA ligase/mRNA capping enzyme"/>
    <property type="match status" value="1"/>
</dbReference>
<dbReference type="Gene3D" id="2.40.50.140">
    <property type="entry name" value="Nucleic acid-binding proteins"/>
    <property type="match status" value="1"/>
</dbReference>
<dbReference type="InterPro" id="IPR044125">
    <property type="entry name" value="Adenylation_DNA_ligase_IV"/>
</dbReference>
<dbReference type="InterPro" id="IPR001357">
    <property type="entry name" value="BRCT_dom"/>
</dbReference>
<dbReference type="InterPro" id="IPR036420">
    <property type="entry name" value="BRCT_dom_sf"/>
</dbReference>
<dbReference type="InterPro" id="IPR000977">
    <property type="entry name" value="DNA_ligase_ATP-dep"/>
</dbReference>
<dbReference type="InterPro" id="IPR012309">
    <property type="entry name" value="DNA_ligase_ATP-dep_C"/>
</dbReference>
<dbReference type="InterPro" id="IPR012310">
    <property type="entry name" value="DNA_ligase_ATP-dep_cent"/>
</dbReference>
<dbReference type="InterPro" id="IPR016059">
    <property type="entry name" value="DNA_ligase_ATP-dep_CS"/>
</dbReference>
<dbReference type="InterPro" id="IPR012308">
    <property type="entry name" value="DNA_ligase_ATP-dep_N"/>
</dbReference>
<dbReference type="InterPro" id="IPR036599">
    <property type="entry name" value="DNA_ligase_N_sf"/>
</dbReference>
<dbReference type="InterPro" id="IPR029710">
    <property type="entry name" value="LIG4"/>
</dbReference>
<dbReference type="InterPro" id="IPR012340">
    <property type="entry name" value="NA-bd_OB-fold"/>
</dbReference>
<dbReference type="NCBIfam" id="TIGR00574">
    <property type="entry name" value="dnl1"/>
    <property type="match status" value="1"/>
</dbReference>
<dbReference type="PANTHER" id="PTHR45997">
    <property type="entry name" value="DNA LIGASE 4"/>
    <property type="match status" value="1"/>
</dbReference>
<dbReference type="PANTHER" id="PTHR45997:SF1">
    <property type="entry name" value="DNA LIGASE 4"/>
    <property type="match status" value="1"/>
</dbReference>
<dbReference type="Pfam" id="PF00533">
    <property type="entry name" value="BRCT"/>
    <property type="match status" value="1"/>
</dbReference>
<dbReference type="Pfam" id="PF16589">
    <property type="entry name" value="BRCT_2"/>
    <property type="match status" value="1"/>
</dbReference>
<dbReference type="Pfam" id="PF04679">
    <property type="entry name" value="DNA_ligase_A_C"/>
    <property type="match status" value="1"/>
</dbReference>
<dbReference type="Pfam" id="PF01068">
    <property type="entry name" value="DNA_ligase_A_M"/>
    <property type="match status" value="1"/>
</dbReference>
<dbReference type="Pfam" id="PF04675">
    <property type="entry name" value="DNA_ligase_A_N"/>
    <property type="match status" value="1"/>
</dbReference>
<dbReference type="SMART" id="SM00292">
    <property type="entry name" value="BRCT"/>
    <property type="match status" value="2"/>
</dbReference>
<dbReference type="SUPFAM" id="SSF117018">
    <property type="entry name" value="ATP-dependent DNA ligase DNA-binding domain"/>
    <property type="match status" value="1"/>
</dbReference>
<dbReference type="SUPFAM" id="SSF52113">
    <property type="entry name" value="BRCT domain"/>
    <property type="match status" value="2"/>
</dbReference>
<dbReference type="SUPFAM" id="SSF56091">
    <property type="entry name" value="DNA ligase/mRNA capping enzyme, catalytic domain"/>
    <property type="match status" value="1"/>
</dbReference>
<dbReference type="SUPFAM" id="SSF50249">
    <property type="entry name" value="Nucleic acid-binding proteins"/>
    <property type="match status" value="1"/>
</dbReference>
<dbReference type="PROSITE" id="PS50172">
    <property type="entry name" value="BRCT"/>
    <property type="match status" value="2"/>
</dbReference>
<dbReference type="PROSITE" id="PS00697">
    <property type="entry name" value="DNA_LIGASE_A1"/>
    <property type="match status" value="1"/>
</dbReference>
<dbReference type="PROSITE" id="PS00333">
    <property type="entry name" value="DNA_LIGASE_A2"/>
    <property type="match status" value="1"/>
</dbReference>
<dbReference type="PROSITE" id="PS50160">
    <property type="entry name" value="DNA_LIGASE_A3"/>
    <property type="match status" value="1"/>
</dbReference>
<organism>
    <name type="scientific">Coprinopsis cinerea</name>
    <name type="common">Inky cap fungus</name>
    <name type="synonym">Hormographiella aspergillata</name>
    <dbReference type="NCBI Taxonomy" id="5346"/>
    <lineage>
        <taxon>Eukaryota</taxon>
        <taxon>Fungi</taxon>
        <taxon>Dikarya</taxon>
        <taxon>Basidiomycota</taxon>
        <taxon>Agaricomycotina</taxon>
        <taxon>Agaricomycetes</taxon>
        <taxon>Agaricomycetidae</taxon>
        <taxon>Agaricales</taxon>
        <taxon>Agaricineae</taxon>
        <taxon>Psathyrellaceae</taxon>
        <taxon>Coprinopsis</taxon>
    </lineage>
</organism>
<name>DNLI4_COPCI</name>
<proteinExistence type="evidence at transcript level"/>
<evidence type="ECO:0000250" key="1">
    <source>
        <dbReference type="UniProtKB" id="P49917"/>
    </source>
</evidence>
<evidence type="ECO:0000250" key="2">
    <source>
        <dbReference type="UniProtKB" id="Q08387"/>
    </source>
</evidence>
<evidence type="ECO:0000255" key="3"/>
<evidence type="ECO:0000255" key="4">
    <source>
        <dbReference type="PROSITE-ProRule" id="PRU00033"/>
    </source>
</evidence>
<evidence type="ECO:0000255" key="5">
    <source>
        <dbReference type="PROSITE-ProRule" id="PRU10135"/>
    </source>
</evidence>
<evidence type="ECO:0000256" key="6">
    <source>
        <dbReference type="SAM" id="MobiDB-lite"/>
    </source>
</evidence>
<evidence type="ECO:0000269" key="7">
    <source>
    </source>
</evidence>
<evidence type="ECO:0000305" key="8"/>
<keyword id="KW-0067">ATP-binding</keyword>
<keyword id="KW-0227">DNA damage</keyword>
<keyword id="KW-0233">DNA recombination</keyword>
<keyword id="KW-0234">DNA repair</keyword>
<keyword id="KW-0436">Ligase</keyword>
<keyword id="KW-0460">Magnesium</keyword>
<keyword id="KW-0479">Metal-binding</keyword>
<keyword id="KW-0547">Nucleotide-binding</keyword>
<keyword id="KW-0539">Nucleus</keyword>
<keyword id="KW-0677">Repeat</keyword>
<protein>
    <recommendedName>
        <fullName>DNA ligase 4</fullName>
        <ecNumber evidence="5">6.5.1.1</ecNumber>
    </recommendedName>
    <alternativeName>
        <fullName>DNA ligase IV</fullName>
    </alternativeName>
    <alternativeName>
        <fullName>Polydeoxyribonucleotide synthase [ATP] 4</fullName>
    </alternativeName>
</protein>
<sequence length="1025" mass="116825">MMQPTPAPSSAPGSPQRTQAEPEMETPSYPQPPQNVGTAPFSVLVKLFEKLATERKQERRRKLLDAWFRHWRREKGFDLYPVLRLLLPQKDRDRAVYGLKEKNLAKTYIKLIPLGMRDPDAIRLLNWKKPTERDKSSGDFPQVLCEVVSKRSSVIEGTLTIDELNEILDDIAKNMGKSDVQSKILRRIYNNSTADEQRWIIRIILKDMNISVKETTVFAVFHPDAQDLYNTCSDLKKVAWELWDPSRRLNAKDKEIQIFHAFAPMLCKRPTRKIEETVKAMGGSKFIIEEKLDGERMQLHKRGNEYFYCSRKGKDYTYLYGKHIGAGSLTPFIDSAFDSRIDDIILDGEMLVWDPVSERNLPFGTLKTAALDRSKKENNPRPCFKVFDLLYLNGMSLLDKTVKFRKNNLRHCIKPIPGRIEFVEEYQGETANDIRKRMEQVMENRGEGLVIKHPKAKYILNGRNTDWIKVKPEYMDNMGETVDVLVVAGNYGSGKRGGGVSTLICAVMDDRRPDSDDEPKYSSFVRIGTGLSFADYVWVRSKPWKVWDPKNPPEFLQTAKKGQEDKGDVYLEPEDSFILKVKAAEITPSDQYHMGFTMRFPRALAIRDDLSIADCMTATEVFESLKSERKRKMEDDAGITTKKRKTTVKKVALLPEYSGPNLKKVAVKTDIFNGMKFVVFSDPKSRTGEADKKELMKTIHANGGTCSQIVNKNSEAIVIYGGSITPYDLKLVIDKGIHDVIKPSWITDSVTLGEPAPFKKKYFFHATEERKYADEYNEDDGEEEGAVPSADEQERDVKSGTVEPGSETEDEDEEQAPEIKEEQDGELHEWLKVDDRKSPALPAHDEEDSVTEDDSDNADVADEEEPDLDDWFQVKGETEDEGAGALATASRHRETTPDVDGDVKMGESEEAMDYDPDVIFKHLCFYLDSPANAQRHGMATRPKYEAAITKSFEEVEKLIKDNGGKIVDLDEPKLTHVVLDKRDDSRRVELMKRTSKPRRRHLVLSDYIEACIDEGTLLDEEEFAP</sequence>
<reference key="1">
    <citation type="journal article" date="2003" name="Microbiology">
        <title>DNA ligase IV from a basidiomycete, Coprinus cinereus, and its expression during meiosis.</title>
        <authorList>
            <person name="Namekawa S."/>
            <person name="Ichijima Y."/>
            <person name="Hamada F."/>
            <person name="Kasai N."/>
            <person name="Iwabata K."/>
            <person name="Nara T."/>
            <person name="Teraoka H."/>
            <person name="Sugawara F."/>
            <person name="Sakaguchi K."/>
        </authorList>
    </citation>
    <scope>NUCLEOTIDE SEQUENCE [MRNA]</scope>
    <scope>FUNCTION</scope>
    <source>
        <strain>ATCC 56838</strain>
    </source>
</reference>
<comment type="function">
    <text evidence="7">DNA ligase involved in DNA non-homologous end joining (NHEJ); required for double-strand break (DSB) repair.</text>
</comment>
<comment type="catalytic activity">
    <reaction evidence="5">
        <text>ATP + (deoxyribonucleotide)n-3'-hydroxyl + 5'-phospho-(deoxyribonucleotide)m = (deoxyribonucleotide)n+m + AMP + diphosphate.</text>
        <dbReference type="EC" id="6.5.1.1"/>
    </reaction>
</comment>
<comment type="cofactor">
    <cofactor evidence="1">
        <name>Mg(2+)</name>
        <dbReference type="ChEBI" id="CHEBI:18420"/>
    </cofactor>
</comment>
<comment type="subcellular location">
    <subcellularLocation>
        <location evidence="2">Nucleus</location>
    </subcellularLocation>
</comment>
<comment type="similarity">
    <text evidence="8">Belongs to the ATP-dependent DNA ligase family.</text>
</comment>